<name>RL362_ECOHS</name>
<keyword id="KW-0687">Ribonucleoprotein</keyword>
<keyword id="KW-0689">Ribosomal protein</keyword>
<dbReference type="EMBL" id="CP000802">
    <property type="protein sequence ID" value="ABV04737.1"/>
    <property type="molecule type" value="Genomic_DNA"/>
</dbReference>
<dbReference type="SMR" id="A7ZWT3"/>
<dbReference type="KEGG" id="ecx:EcHS_A0349"/>
<dbReference type="HOGENOM" id="CLU_135723_3_1_6"/>
<dbReference type="GO" id="GO:1990904">
    <property type="term" value="C:ribonucleoprotein complex"/>
    <property type="evidence" value="ECO:0007669"/>
    <property type="project" value="UniProtKB-KW"/>
</dbReference>
<dbReference type="GO" id="GO:0005840">
    <property type="term" value="C:ribosome"/>
    <property type="evidence" value="ECO:0007669"/>
    <property type="project" value="UniProtKB-KW"/>
</dbReference>
<dbReference type="GO" id="GO:0003735">
    <property type="term" value="F:structural constituent of ribosome"/>
    <property type="evidence" value="ECO:0007669"/>
    <property type="project" value="InterPro"/>
</dbReference>
<dbReference type="GO" id="GO:0006412">
    <property type="term" value="P:translation"/>
    <property type="evidence" value="ECO:0007669"/>
    <property type="project" value="UniProtKB-UniRule"/>
</dbReference>
<dbReference type="HAMAP" id="MF_00251">
    <property type="entry name" value="Ribosomal_bL36"/>
    <property type="match status" value="1"/>
</dbReference>
<dbReference type="InterPro" id="IPR000473">
    <property type="entry name" value="Ribosomal_bL36"/>
</dbReference>
<dbReference type="InterPro" id="IPR035977">
    <property type="entry name" value="Ribosomal_bL36_sp"/>
</dbReference>
<dbReference type="InterPro" id="IPR047621">
    <property type="entry name" value="Ribosomal_L36_bact"/>
</dbReference>
<dbReference type="NCBIfam" id="NF002021">
    <property type="entry name" value="PRK00831.1"/>
    <property type="match status" value="1"/>
</dbReference>
<dbReference type="NCBIfam" id="TIGR01022">
    <property type="entry name" value="rpmJ_bact"/>
    <property type="match status" value="1"/>
</dbReference>
<dbReference type="PANTHER" id="PTHR47781">
    <property type="entry name" value="50S RIBOSOMAL PROTEIN L36 2"/>
    <property type="match status" value="1"/>
</dbReference>
<dbReference type="PANTHER" id="PTHR47781:SF1">
    <property type="entry name" value="LARGE RIBOSOMAL SUBUNIT PROTEIN BL36B"/>
    <property type="match status" value="1"/>
</dbReference>
<dbReference type="Pfam" id="PF00444">
    <property type="entry name" value="Ribosomal_L36"/>
    <property type="match status" value="1"/>
</dbReference>
<dbReference type="SUPFAM" id="SSF57840">
    <property type="entry name" value="Ribosomal protein L36"/>
    <property type="match status" value="1"/>
</dbReference>
<dbReference type="PROSITE" id="PS00828">
    <property type="entry name" value="RIBOSOMAL_L36"/>
    <property type="match status" value="1"/>
</dbReference>
<reference key="1">
    <citation type="journal article" date="2008" name="J. Bacteriol.">
        <title>The pangenome structure of Escherichia coli: comparative genomic analysis of E. coli commensal and pathogenic isolates.</title>
        <authorList>
            <person name="Rasko D.A."/>
            <person name="Rosovitz M.J."/>
            <person name="Myers G.S.A."/>
            <person name="Mongodin E.F."/>
            <person name="Fricke W.F."/>
            <person name="Gajer P."/>
            <person name="Crabtree J."/>
            <person name="Sebaihia M."/>
            <person name="Thomson N.R."/>
            <person name="Chaudhuri R."/>
            <person name="Henderson I.R."/>
            <person name="Sperandio V."/>
            <person name="Ravel J."/>
        </authorList>
    </citation>
    <scope>NUCLEOTIDE SEQUENCE [LARGE SCALE GENOMIC DNA]</scope>
    <source>
        <strain>HS</strain>
    </source>
</reference>
<organism>
    <name type="scientific">Escherichia coli O9:H4 (strain HS)</name>
    <dbReference type="NCBI Taxonomy" id="331112"/>
    <lineage>
        <taxon>Bacteria</taxon>
        <taxon>Pseudomonadati</taxon>
        <taxon>Pseudomonadota</taxon>
        <taxon>Gammaproteobacteria</taxon>
        <taxon>Enterobacterales</taxon>
        <taxon>Enterobacteriaceae</taxon>
        <taxon>Escherichia</taxon>
    </lineage>
</organism>
<comment type="similarity">
    <text evidence="1">Belongs to the bacterial ribosomal protein bL36 family.</text>
</comment>
<proteinExistence type="inferred from homology"/>
<sequence length="46" mass="5467">MKVLNSLRTAKERHPDCQIVKRKGRLYVICKSNPRFKAVQGRKKKR</sequence>
<accession>A7ZWT3</accession>
<feature type="chain" id="PRO_0000344681" description="Large ribosomal subunit protein bL36B">
    <location>
        <begin position="1"/>
        <end position="46"/>
    </location>
</feature>
<protein>
    <recommendedName>
        <fullName evidence="1">Large ribosomal subunit protein bL36B</fullName>
    </recommendedName>
    <alternativeName>
        <fullName evidence="2">50S ribosomal protein L36 2</fullName>
    </alternativeName>
</protein>
<gene>
    <name evidence="1" type="primary">rpmJ2</name>
    <name type="ordered locus">EcHS_A0349</name>
</gene>
<evidence type="ECO:0000255" key="1">
    <source>
        <dbReference type="HAMAP-Rule" id="MF_00251"/>
    </source>
</evidence>
<evidence type="ECO:0000305" key="2"/>